<name>PLSB_SALDC</name>
<dbReference type="EC" id="2.3.1.15" evidence="1"/>
<dbReference type="EMBL" id="CP001144">
    <property type="protein sequence ID" value="ACH77280.1"/>
    <property type="molecule type" value="Genomic_DNA"/>
</dbReference>
<dbReference type="RefSeq" id="WP_000017360.1">
    <property type="nucleotide sequence ID" value="NC_011205.1"/>
</dbReference>
<dbReference type="SMR" id="B5FQQ9"/>
<dbReference type="KEGG" id="sed:SeD_A4629"/>
<dbReference type="HOGENOM" id="CLU_015407_0_0_6"/>
<dbReference type="UniPathway" id="UPA00557">
    <property type="reaction ID" value="UER00612"/>
</dbReference>
<dbReference type="Proteomes" id="UP000008322">
    <property type="component" value="Chromosome"/>
</dbReference>
<dbReference type="GO" id="GO:0005886">
    <property type="term" value="C:plasma membrane"/>
    <property type="evidence" value="ECO:0007669"/>
    <property type="project" value="UniProtKB-SubCell"/>
</dbReference>
<dbReference type="GO" id="GO:0004366">
    <property type="term" value="F:glycerol-3-phosphate O-acyltransferase activity"/>
    <property type="evidence" value="ECO:0007669"/>
    <property type="project" value="UniProtKB-UniRule"/>
</dbReference>
<dbReference type="GO" id="GO:0016024">
    <property type="term" value="P:CDP-diacylglycerol biosynthetic process"/>
    <property type="evidence" value="ECO:0007669"/>
    <property type="project" value="UniProtKB-UniRule"/>
</dbReference>
<dbReference type="GO" id="GO:0006631">
    <property type="term" value="P:fatty acid metabolic process"/>
    <property type="evidence" value="ECO:0007669"/>
    <property type="project" value="TreeGrafter"/>
</dbReference>
<dbReference type="CDD" id="cd07993">
    <property type="entry name" value="LPLAT_DHAPAT-like"/>
    <property type="match status" value="1"/>
</dbReference>
<dbReference type="HAMAP" id="MF_00393">
    <property type="entry name" value="Glyc3P_acyltrans"/>
    <property type="match status" value="1"/>
</dbReference>
<dbReference type="InterPro" id="IPR022284">
    <property type="entry name" value="GPAT/DHAPAT"/>
</dbReference>
<dbReference type="InterPro" id="IPR045520">
    <property type="entry name" value="GPAT/DHAPAT_C"/>
</dbReference>
<dbReference type="InterPro" id="IPR041728">
    <property type="entry name" value="GPAT/DHAPAT_LPLAT"/>
</dbReference>
<dbReference type="InterPro" id="IPR028354">
    <property type="entry name" value="GPAT_PlsB"/>
</dbReference>
<dbReference type="InterPro" id="IPR002123">
    <property type="entry name" value="Plipid/glycerol_acylTrfase"/>
</dbReference>
<dbReference type="NCBIfam" id="TIGR03703">
    <property type="entry name" value="plsB"/>
    <property type="match status" value="1"/>
</dbReference>
<dbReference type="NCBIfam" id="NF003441">
    <property type="entry name" value="PRK04974.1"/>
    <property type="match status" value="1"/>
</dbReference>
<dbReference type="PANTHER" id="PTHR12563:SF17">
    <property type="entry name" value="DIHYDROXYACETONE PHOSPHATE ACYLTRANSFERASE"/>
    <property type="match status" value="1"/>
</dbReference>
<dbReference type="PANTHER" id="PTHR12563">
    <property type="entry name" value="GLYCEROL-3-PHOSPHATE ACYLTRANSFERASE"/>
    <property type="match status" value="1"/>
</dbReference>
<dbReference type="Pfam" id="PF01553">
    <property type="entry name" value="Acyltransferase"/>
    <property type="match status" value="1"/>
</dbReference>
<dbReference type="Pfam" id="PF19277">
    <property type="entry name" value="GPAT_C"/>
    <property type="match status" value="1"/>
</dbReference>
<dbReference type="PIRSF" id="PIRSF500064">
    <property type="entry name" value="GPAT"/>
    <property type="match status" value="1"/>
</dbReference>
<dbReference type="PIRSF" id="PIRSF000437">
    <property type="entry name" value="GPAT_DHAPAT"/>
    <property type="match status" value="1"/>
</dbReference>
<dbReference type="SMART" id="SM00563">
    <property type="entry name" value="PlsC"/>
    <property type="match status" value="1"/>
</dbReference>
<dbReference type="SUPFAM" id="SSF69593">
    <property type="entry name" value="Glycerol-3-phosphate (1)-acyltransferase"/>
    <property type="match status" value="1"/>
</dbReference>
<accession>B5FQQ9</accession>
<comment type="catalytic activity">
    <reaction evidence="1">
        <text>sn-glycerol 3-phosphate + an acyl-CoA = a 1-acyl-sn-glycero-3-phosphate + CoA</text>
        <dbReference type="Rhea" id="RHEA:15325"/>
        <dbReference type="ChEBI" id="CHEBI:57287"/>
        <dbReference type="ChEBI" id="CHEBI:57597"/>
        <dbReference type="ChEBI" id="CHEBI:57970"/>
        <dbReference type="ChEBI" id="CHEBI:58342"/>
        <dbReference type="EC" id="2.3.1.15"/>
    </reaction>
</comment>
<comment type="pathway">
    <text evidence="1">Phospholipid metabolism; CDP-diacylglycerol biosynthesis; CDP-diacylglycerol from sn-glycerol 3-phosphate: step 1/3.</text>
</comment>
<comment type="subcellular location">
    <subcellularLocation>
        <location evidence="1">Cell inner membrane</location>
        <topology evidence="1">Peripheral membrane protein</topology>
        <orientation evidence="1">Cytoplasmic side</orientation>
    </subcellularLocation>
</comment>
<comment type="domain">
    <text evidence="1">The HXXXXD motif is essential for acyltransferase activity and may constitute the binding site for the phosphate moiety of the glycerol-3-phosphate.</text>
</comment>
<comment type="similarity">
    <text evidence="1">Belongs to the GPAT/DAPAT family.</text>
</comment>
<protein>
    <recommendedName>
        <fullName evidence="1">Glycerol-3-phosphate acyltransferase</fullName>
        <shortName evidence="1">GPAT</shortName>
        <ecNumber evidence="1">2.3.1.15</ecNumber>
    </recommendedName>
</protein>
<organism>
    <name type="scientific">Salmonella dublin (strain CT_02021853)</name>
    <dbReference type="NCBI Taxonomy" id="439851"/>
    <lineage>
        <taxon>Bacteria</taxon>
        <taxon>Pseudomonadati</taxon>
        <taxon>Pseudomonadota</taxon>
        <taxon>Gammaproteobacteria</taxon>
        <taxon>Enterobacterales</taxon>
        <taxon>Enterobacteriaceae</taxon>
        <taxon>Salmonella</taxon>
    </lineage>
</organism>
<feature type="chain" id="PRO_1000123090" description="Glycerol-3-phosphate acyltransferase">
    <location>
        <begin position="1"/>
        <end position="806"/>
    </location>
</feature>
<feature type="short sequence motif" description="HXXXXD motif">
    <location>
        <begin position="305"/>
        <end position="310"/>
    </location>
</feature>
<keyword id="KW-0012">Acyltransferase</keyword>
<keyword id="KW-0997">Cell inner membrane</keyword>
<keyword id="KW-1003">Cell membrane</keyword>
<keyword id="KW-0444">Lipid biosynthesis</keyword>
<keyword id="KW-0443">Lipid metabolism</keyword>
<keyword id="KW-0472">Membrane</keyword>
<keyword id="KW-0594">Phospholipid biosynthesis</keyword>
<keyword id="KW-1208">Phospholipid metabolism</keyword>
<keyword id="KW-0808">Transferase</keyword>
<evidence type="ECO:0000255" key="1">
    <source>
        <dbReference type="HAMAP-Rule" id="MF_00393"/>
    </source>
</evidence>
<proteinExistence type="inferred from homology"/>
<sequence length="806" mass="91227">MSGWPRIYYKLLNLPLSILVKSKSIPAEPAQELGLDTSRPIMYVLPYNSKADLLTLRAQCLAHDLPDPLEPLEIDGALLPRYVFIHGGPRVFTYYTPKEESVKLFHDYLDLHRSNPALDVQMVPVSVMFGRAPGREKGEDNPPLRMLNGVQKFFAISWLGRDSFVRFSPSVSLRRMADEHGTDKIIAQKLARVARMHFARQRLAAVGPRLPARQDLFNKLLASKAIARAVEDEARSKKISHEKAQQNAIALMEEIAANFSYEMIRLTDRILGFTWNRLYQGINVHNAERVRQLAHDGHEIVYVPCHRSHMDYLLLSYVLYHQGLVPPHIAAGINLNFWPAGPIFRRLGAFFIRRTFKGNKLYSTVFREYLGELFSRGYSVEYFVEGGRSRTGRLLDPKTGTLSMTIQAMLRGGTRPITLVPIYIGYEHVMEVGTYAKELRGATKEKESLPQMLKGLSKLRNLGQGYVNFGEPMPLMTYLNQHVPEWRESIDPIEAIRPAWLTPTVNSIAADLMVRINNAGAANAMNLCCTALLASRQRSLTREQLTEQLDCYLDLMRNVPYSTDSTVPAASAGELIAHALQMNKFEVEKDTIGDIIILPREQAVLMTYYRNNIAHMLIMPSLMAAIITQHRRISRDALQQHVEALYPMLKAELFLRWEREELASVIDALASEMQRQGLITLQDDELHINPTHSRTLQLLAAGARETLQRYAITFWLLSANPSINRSTLEKESRTVAQRLSVLHGINAPEFFDKAVFSSLVLTLRDEGYISDTGDAEPAETMKIYQMLADLITSDVRLTIESATQGE</sequence>
<gene>
    <name evidence="1" type="primary">plsB</name>
    <name type="ordered locus">SeD_A4629</name>
</gene>
<reference key="1">
    <citation type="journal article" date="2011" name="J. Bacteriol.">
        <title>Comparative genomics of 28 Salmonella enterica isolates: evidence for CRISPR-mediated adaptive sublineage evolution.</title>
        <authorList>
            <person name="Fricke W.F."/>
            <person name="Mammel M.K."/>
            <person name="McDermott P.F."/>
            <person name="Tartera C."/>
            <person name="White D.G."/>
            <person name="Leclerc J.E."/>
            <person name="Ravel J."/>
            <person name="Cebula T.A."/>
        </authorList>
    </citation>
    <scope>NUCLEOTIDE SEQUENCE [LARGE SCALE GENOMIC DNA]</scope>
    <source>
        <strain>CT_02021853</strain>
    </source>
</reference>